<comment type="similarity">
    <text evidence="1">Belongs to the UPF0335 family.</text>
</comment>
<name>Y1207_BARQU</name>
<organism>
    <name type="scientific">Bartonella quintana (strain Toulouse)</name>
    <name type="common">Rochalimaea quintana</name>
    <dbReference type="NCBI Taxonomy" id="283165"/>
    <lineage>
        <taxon>Bacteria</taxon>
        <taxon>Pseudomonadati</taxon>
        <taxon>Pseudomonadota</taxon>
        <taxon>Alphaproteobacteria</taxon>
        <taxon>Hyphomicrobiales</taxon>
        <taxon>Bartonellaceae</taxon>
        <taxon>Bartonella</taxon>
    </lineage>
</organism>
<evidence type="ECO:0000255" key="1">
    <source>
        <dbReference type="HAMAP-Rule" id="MF_00797"/>
    </source>
</evidence>
<proteinExistence type="inferred from homology"/>
<protein>
    <recommendedName>
        <fullName evidence="1">UPF0335 protein BQ12070</fullName>
    </recommendedName>
</protein>
<sequence length="85" mass="9907">MNTVTDQPHSISVNQLRAFIERIERLEEEKKTISDDIKEVYAELKGSGFDSKAVRSIIRLRKKEDHERMEEEAIIQLYKNALGMS</sequence>
<feature type="chain" id="PRO_0000219922" description="UPF0335 protein BQ12070">
    <location>
        <begin position="1"/>
        <end position="85"/>
    </location>
</feature>
<reference key="1">
    <citation type="journal article" date="2004" name="Proc. Natl. Acad. Sci. U.S.A.">
        <title>The louse-borne human pathogen Bartonella quintana is a genomic derivative of the zoonotic agent Bartonella henselae.</title>
        <authorList>
            <person name="Alsmark U.C.M."/>
            <person name="Frank A.C."/>
            <person name="Karlberg E.O."/>
            <person name="Legault B.-A."/>
            <person name="Ardell D.H."/>
            <person name="Canbaeck B."/>
            <person name="Eriksson A.-S."/>
            <person name="Naeslund A.K."/>
            <person name="Handley S.A."/>
            <person name="Huvet M."/>
            <person name="La Scola B."/>
            <person name="Holmberg M."/>
            <person name="Andersson S.G.E."/>
        </authorList>
    </citation>
    <scope>NUCLEOTIDE SEQUENCE [LARGE SCALE GENOMIC DNA]</scope>
    <source>
        <strain>Toulouse</strain>
    </source>
</reference>
<gene>
    <name type="ordered locus">BQ12070</name>
</gene>
<accession>Q6FYM8</accession>
<dbReference type="EMBL" id="BX897700">
    <property type="protein sequence ID" value="CAF26666.1"/>
    <property type="molecule type" value="Genomic_DNA"/>
</dbReference>
<dbReference type="RefSeq" id="WP_011179837.1">
    <property type="nucleotide sequence ID" value="NC_005955.1"/>
</dbReference>
<dbReference type="SMR" id="Q6FYM8"/>
<dbReference type="KEGG" id="bqu:BQ12070"/>
<dbReference type="eggNOG" id="COG3750">
    <property type="taxonomic scope" value="Bacteria"/>
</dbReference>
<dbReference type="HOGENOM" id="CLU_158651_3_0_5"/>
<dbReference type="OrthoDB" id="9813793at2"/>
<dbReference type="Proteomes" id="UP000000597">
    <property type="component" value="Chromosome"/>
</dbReference>
<dbReference type="GO" id="GO:0003677">
    <property type="term" value="F:DNA binding"/>
    <property type="evidence" value="ECO:0007669"/>
    <property type="project" value="InterPro"/>
</dbReference>
<dbReference type="HAMAP" id="MF_00797">
    <property type="entry name" value="UPF0335"/>
    <property type="match status" value="1"/>
</dbReference>
<dbReference type="InterPro" id="IPR018753">
    <property type="entry name" value="GapR-like"/>
</dbReference>
<dbReference type="InterPro" id="IPR046367">
    <property type="entry name" value="GapR-like_DNA-bd"/>
</dbReference>
<dbReference type="NCBIfam" id="NF010247">
    <property type="entry name" value="PRK13694.1"/>
    <property type="match status" value="1"/>
</dbReference>
<dbReference type="Pfam" id="PF10073">
    <property type="entry name" value="GapR_DNA-bd"/>
    <property type="match status" value="1"/>
</dbReference>